<name>DAPE_YERPE</name>
<dbReference type="EC" id="3.5.1.18" evidence="1"/>
<dbReference type="EMBL" id="AE009952">
    <property type="protein sequence ID" value="AAM84999.1"/>
    <property type="molecule type" value="Genomic_DNA"/>
</dbReference>
<dbReference type="EMBL" id="AE017042">
    <property type="protein sequence ID" value="AAS62865.1"/>
    <property type="molecule type" value="Genomic_DNA"/>
</dbReference>
<dbReference type="EMBL" id="AL590842">
    <property type="protein sequence ID" value="CAL21655.1"/>
    <property type="molecule type" value="Genomic_DNA"/>
</dbReference>
<dbReference type="PIR" id="AD0371">
    <property type="entry name" value="AD0371"/>
</dbReference>
<dbReference type="RefSeq" id="WP_002208549.1">
    <property type="nucleotide sequence ID" value="NZ_WUCM01000010.1"/>
</dbReference>
<dbReference type="RefSeq" id="YP_002347973.1">
    <property type="nucleotide sequence ID" value="NC_003143.1"/>
</dbReference>
<dbReference type="SMR" id="Q7CJI9"/>
<dbReference type="STRING" id="214092.YPO3053"/>
<dbReference type="MEROPS" id="M20.010"/>
<dbReference type="PaxDb" id="214092-YPO3053"/>
<dbReference type="DNASU" id="1146374"/>
<dbReference type="EnsemblBacteria" id="AAS62865">
    <property type="protein sequence ID" value="AAS62865"/>
    <property type="gene ID" value="YP_2675"/>
</dbReference>
<dbReference type="GeneID" id="57975649"/>
<dbReference type="KEGG" id="ype:YPO3053"/>
<dbReference type="KEGG" id="ypk:y1427"/>
<dbReference type="KEGG" id="ypm:YP_2675"/>
<dbReference type="PATRIC" id="fig|214092.21.peg.3509"/>
<dbReference type="eggNOG" id="COG0624">
    <property type="taxonomic scope" value="Bacteria"/>
</dbReference>
<dbReference type="HOGENOM" id="CLU_021802_4_0_6"/>
<dbReference type="OMA" id="PKYGWTD"/>
<dbReference type="OrthoDB" id="9809784at2"/>
<dbReference type="UniPathway" id="UPA00034">
    <property type="reaction ID" value="UER00021"/>
</dbReference>
<dbReference type="Proteomes" id="UP000000815">
    <property type="component" value="Chromosome"/>
</dbReference>
<dbReference type="Proteomes" id="UP000001019">
    <property type="component" value="Chromosome"/>
</dbReference>
<dbReference type="Proteomes" id="UP000002490">
    <property type="component" value="Chromosome"/>
</dbReference>
<dbReference type="GO" id="GO:0005829">
    <property type="term" value="C:cytosol"/>
    <property type="evidence" value="ECO:0000318"/>
    <property type="project" value="GO_Central"/>
</dbReference>
<dbReference type="GO" id="GO:0050897">
    <property type="term" value="F:cobalt ion binding"/>
    <property type="evidence" value="ECO:0007669"/>
    <property type="project" value="UniProtKB-UniRule"/>
</dbReference>
<dbReference type="GO" id="GO:0009014">
    <property type="term" value="F:succinyl-diaminopimelate desuccinylase activity"/>
    <property type="evidence" value="ECO:0000318"/>
    <property type="project" value="GO_Central"/>
</dbReference>
<dbReference type="GO" id="GO:0008270">
    <property type="term" value="F:zinc ion binding"/>
    <property type="evidence" value="ECO:0007669"/>
    <property type="project" value="UniProtKB-UniRule"/>
</dbReference>
<dbReference type="GO" id="GO:0019877">
    <property type="term" value="P:diaminopimelate biosynthetic process"/>
    <property type="evidence" value="ECO:0007669"/>
    <property type="project" value="UniProtKB-UniRule"/>
</dbReference>
<dbReference type="GO" id="GO:0009089">
    <property type="term" value="P:lysine biosynthetic process via diaminopimelate"/>
    <property type="evidence" value="ECO:0000318"/>
    <property type="project" value="GO_Central"/>
</dbReference>
<dbReference type="CDD" id="cd03891">
    <property type="entry name" value="M20_DapE_proteobac"/>
    <property type="match status" value="1"/>
</dbReference>
<dbReference type="FunFam" id="3.30.70.360:FF:000011">
    <property type="entry name" value="Succinyl-diaminopimelate desuccinylase"/>
    <property type="match status" value="1"/>
</dbReference>
<dbReference type="FunFam" id="3.40.630.10:FF:000005">
    <property type="entry name" value="Succinyl-diaminopimelate desuccinylase"/>
    <property type="match status" value="1"/>
</dbReference>
<dbReference type="FunFam" id="3.40.630.10:FF:000010">
    <property type="entry name" value="Succinyl-diaminopimelate desuccinylase"/>
    <property type="match status" value="1"/>
</dbReference>
<dbReference type="Gene3D" id="3.40.630.10">
    <property type="entry name" value="Zn peptidases"/>
    <property type="match status" value="2"/>
</dbReference>
<dbReference type="HAMAP" id="MF_01690">
    <property type="entry name" value="DapE"/>
    <property type="match status" value="1"/>
</dbReference>
<dbReference type="InterPro" id="IPR001261">
    <property type="entry name" value="ArgE/DapE_CS"/>
</dbReference>
<dbReference type="InterPro" id="IPR036264">
    <property type="entry name" value="Bact_exopeptidase_dim_dom"/>
</dbReference>
<dbReference type="InterPro" id="IPR005941">
    <property type="entry name" value="DapE_proteobac"/>
</dbReference>
<dbReference type="InterPro" id="IPR002933">
    <property type="entry name" value="Peptidase_M20"/>
</dbReference>
<dbReference type="InterPro" id="IPR011650">
    <property type="entry name" value="Peptidase_M20_dimer"/>
</dbReference>
<dbReference type="InterPro" id="IPR050072">
    <property type="entry name" value="Peptidase_M20A"/>
</dbReference>
<dbReference type="NCBIfam" id="TIGR01246">
    <property type="entry name" value="dapE_proteo"/>
    <property type="match status" value="1"/>
</dbReference>
<dbReference type="NCBIfam" id="NF009557">
    <property type="entry name" value="PRK13009.1"/>
    <property type="match status" value="1"/>
</dbReference>
<dbReference type="PANTHER" id="PTHR43808">
    <property type="entry name" value="ACETYLORNITHINE DEACETYLASE"/>
    <property type="match status" value="1"/>
</dbReference>
<dbReference type="PANTHER" id="PTHR43808:SF31">
    <property type="entry name" value="N-ACETYL-L-CITRULLINE DEACETYLASE"/>
    <property type="match status" value="1"/>
</dbReference>
<dbReference type="Pfam" id="PF07687">
    <property type="entry name" value="M20_dimer"/>
    <property type="match status" value="1"/>
</dbReference>
<dbReference type="Pfam" id="PF01546">
    <property type="entry name" value="Peptidase_M20"/>
    <property type="match status" value="1"/>
</dbReference>
<dbReference type="SUPFAM" id="SSF55031">
    <property type="entry name" value="Bacterial exopeptidase dimerisation domain"/>
    <property type="match status" value="1"/>
</dbReference>
<dbReference type="SUPFAM" id="SSF53187">
    <property type="entry name" value="Zn-dependent exopeptidases"/>
    <property type="match status" value="1"/>
</dbReference>
<dbReference type="PROSITE" id="PS00758">
    <property type="entry name" value="ARGE_DAPE_CPG2_1"/>
    <property type="match status" value="1"/>
</dbReference>
<keyword id="KW-0028">Amino-acid biosynthesis</keyword>
<keyword id="KW-0170">Cobalt</keyword>
<keyword id="KW-0220">Diaminopimelate biosynthesis</keyword>
<keyword id="KW-0378">Hydrolase</keyword>
<keyword id="KW-0457">Lysine biosynthesis</keyword>
<keyword id="KW-0479">Metal-binding</keyword>
<keyword id="KW-1185">Reference proteome</keyword>
<keyword id="KW-0862">Zinc</keyword>
<organism>
    <name type="scientific">Yersinia pestis</name>
    <dbReference type="NCBI Taxonomy" id="632"/>
    <lineage>
        <taxon>Bacteria</taxon>
        <taxon>Pseudomonadati</taxon>
        <taxon>Pseudomonadota</taxon>
        <taxon>Gammaproteobacteria</taxon>
        <taxon>Enterobacterales</taxon>
        <taxon>Yersiniaceae</taxon>
        <taxon>Yersinia</taxon>
    </lineage>
</organism>
<reference key="1">
    <citation type="journal article" date="2002" name="J. Bacteriol.">
        <title>Genome sequence of Yersinia pestis KIM.</title>
        <authorList>
            <person name="Deng W."/>
            <person name="Burland V."/>
            <person name="Plunkett G. III"/>
            <person name="Boutin A."/>
            <person name="Mayhew G.F."/>
            <person name="Liss P."/>
            <person name="Perna N.T."/>
            <person name="Rose D.J."/>
            <person name="Mau B."/>
            <person name="Zhou S."/>
            <person name="Schwartz D.C."/>
            <person name="Fetherston J.D."/>
            <person name="Lindler L.E."/>
            <person name="Brubaker R.R."/>
            <person name="Plano G.V."/>
            <person name="Straley S.C."/>
            <person name="McDonough K.A."/>
            <person name="Nilles M.L."/>
            <person name="Matson J.S."/>
            <person name="Blattner F.R."/>
            <person name="Perry R.D."/>
        </authorList>
    </citation>
    <scope>NUCLEOTIDE SEQUENCE [LARGE SCALE GENOMIC DNA]</scope>
    <source>
        <strain>KIM10+ / Biovar Mediaevalis</strain>
    </source>
</reference>
<reference key="2">
    <citation type="journal article" date="2001" name="Nature">
        <title>Genome sequence of Yersinia pestis, the causative agent of plague.</title>
        <authorList>
            <person name="Parkhill J."/>
            <person name="Wren B.W."/>
            <person name="Thomson N.R."/>
            <person name="Titball R.W."/>
            <person name="Holden M.T.G."/>
            <person name="Prentice M.B."/>
            <person name="Sebaihia M."/>
            <person name="James K.D."/>
            <person name="Churcher C.M."/>
            <person name="Mungall K.L."/>
            <person name="Baker S."/>
            <person name="Basham D."/>
            <person name="Bentley S.D."/>
            <person name="Brooks K."/>
            <person name="Cerdeno-Tarraga A.-M."/>
            <person name="Chillingworth T."/>
            <person name="Cronin A."/>
            <person name="Davies R.M."/>
            <person name="Davis P."/>
            <person name="Dougan G."/>
            <person name="Feltwell T."/>
            <person name="Hamlin N."/>
            <person name="Holroyd S."/>
            <person name="Jagels K."/>
            <person name="Karlyshev A.V."/>
            <person name="Leather S."/>
            <person name="Moule S."/>
            <person name="Oyston P.C.F."/>
            <person name="Quail M.A."/>
            <person name="Rutherford K.M."/>
            <person name="Simmonds M."/>
            <person name="Skelton J."/>
            <person name="Stevens K."/>
            <person name="Whitehead S."/>
            <person name="Barrell B.G."/>
        </authorList>
    </citation>
    <scope>NUCLEOTIDE SEQUENCE [LARGE SCALE GENOMIC DNA]</scope>
    <source>
        <strain>CO-92 / Biovar Orientalis</strain>
    </source>
</reference>
<reference key="3">
    <citation type="journal article" date="2004" name="DNA Res.">
        <title>Complete genome sequence of Yersinia pestis strain 91001, an isolate avirulent to humans.</title>
        <authorList>
            <person name="Song Y."/>
            <person name="Tong Z."/>
            <person name="Wang J."/>
            <person name="Wang L."/>
            <person name="Guo Z."/>
            <person name="Han Y."/>
            <person name="Zhang J."/>
            <person name="Pei D."/>
            <person name="Zhou D."/>
            <person name="Qin H."/>
            <person name="Pang X."/>
            <person name="Han Y."/>
            <person name="Zhai J."/>
            <person name="Li M."/>
            <person name="Cui B."/>
            <person name="Qi Z."/>
            <person name="Jin L."/>
            <person name="Dai R."/>
            <person name="Chen F."/>
            <person name="Li S."/>
            <person name="Ye C."/>
            <person name="Du Z."/>
            <person name="Lin W."/>
            <person name="Wang J."/>
            <person name="Yu J."/>
            <person name="Yang H."/>
            <person name="Wang J."/>
            <person name="Huang P."/>
            <person name="Yang R."/>
        </authorList>
    </citation>
    <scope>NUCLEOTIDE SEQUENCE [LARGE SCALE GENOMIC DNA]</scope>
    <source>
        <strain>91001 / Biovar Mediaevalis</strain>
    </source>
</reference>
<accession>Q7CJI9</accession>
<accession>Q74SD9</accession>
<proteinExistence type="inferred from homology"/>
<feature type="chain" id="PRO_0000375794" description="Succinyl-diaminopimelate desuccinylase">
    <location>
        <begin position="1"/>
        <end position="375"/>
    </location>
</feature>
<feature type="active site" evidence="1">
    <location>
        <position position="68"/>
    </location>
</feature>
<feature type="active site" description="Proton acceptor" evidence="1">
    <location>
        <position position="133"/>
    </location>
</feature>
<feature type="binding site" evidence="1">
    <location>
        <position position="66"/>
    </location>
    <ligand>
        <name>Zn(2+)</name>
        <dbReference type="ChEBI" id="CHEBI:29105"/>
        <label>1</label>
    </ligand>
</feature>
<feature type="binding site" evidence="1">
    <location>
        <position position="99"/>
    </location>
    <ligand>
        <name>Zn(2+)</name>
        <dbReference type="ChEBI" id="CHEBI:29105"/>
        <label>1</label>
    </ligand>
</feature>
<feature type="binding site" evidence="1">
    <location>
        <position position="99"/>
    </location>
    <ligand>
        <name>Zn(2+)</name>
        <dbReference type="ChEBI" id="CHEBI:29105"/>
        <label>2</label>
    </ligand>
</feature>
<feature type="binding site" evidence="1">
    <location>
        <position position="134"/>
    </location>
    <ligand>
        <name>Zn(2+)</name>
        <dbReference type="ChEBI" id="CHEBI:29105"/>
        <label>2</label>
    </ligand>
</feature>
<feature type="binding site" evidence="1">
    <location>
        <position position="162"/>
    </location>
    <ligand>
        <name>Zn(2+)</name>
        <dbReference type="ChEBI" id="CHEBI:29105"/>
        <label>1</label>
    </ligand>
</feature>
<feature type="binding site" evidence="1">
    <location>
        <position position="348"/>
    </location>
    <ligand>
        <name>Zn(2+)</name>
        <dbReference type="ChEBI" id="CHEBI:29105"/>
        <label>2</label>
    </ligand>
</feature>
<sequence length="375" mass="40933">MICPVIELAQQLIKRPSLSPSDAGCQEIMIQRLAAIGFTIEPMNFGDTLNFWAWRGEGETLAFAGHTDVVPTGDESHWHSPPFEPTIRDGMLYGRGAADMKGSLAAMIVAAERFVAAHPDHKGRLAFMITSDEEAKATNGTVKVVEALMARHERLDYCLVGEPSSTDRVGDIVKNGRRGSITANLRIHGVQGHVAYPHLADNPVHRAMPALNELVATQWDEGNAFFPATSMQIANLQAGTGSNNVIPGEFYVQFNFRFSTELTDSLIKQRVAALLDRHQLDYTLEWVLSGQPFLTAKGALVDAVVNAVKHYTEITPQLLTTGGTSDGRFIALMGAQVVELGPVNATIHKVNECVSAADLQLLSRMYQKIMEQLIA</sequence>
<comment type="function">
    <text evidence="1">Catalyzes the hydrolysis of N-succinyl-L,L-diaminopimelic acid (SDAP), forming succinate and LL-2,6-diaminopimelate (DAP), an intermediate involved in the bacterial biosynthesis of lysine and meso-diaminopimelic acid, an essential component of bacterial cell walls.</text>
</comment>
<comment type="catalytic activity">
    <reaction evidence="1">
        <text>N-succinyl-(2S,6S)-2,6-diaminopimelate + H2O = (2S,6S)-2,6-diaminopimelate + succinate</text>
        <dbReference type="Rhea" id="RHEA:22608"/>
        <dbReference type="ChEBI" id="CHEBI:15377"/>
        <dbReference type="ChEBI" id="CHEBI:30031"/>
        <dbReference type="ChEBI" id="CHEBI:57609"/>
        <dbReference type="ChEBI" id="CHEBI:58087"/>
        <dbReference type="EC" id="3.5.1.18"/>
    </reaction>
</comment>
<comment type="cofactor">
    <cofactor evidence="1">
        <name>Zn(2+)</name>
        <dbReference type="ChEBI" id="CHEBI:29105"/>
    </cofactor>
    <cofactor evidence="1">
        <name>Co(2+)</name>
        <dbReference type="ChEBI" id="CHEBI:48828"/>
    </cofactor>
    <text evidence="1">Binds 2 Zn(2+) or Co(2+) ions per subunit.</text>
</comment>
<comment type="pathway">
    <text evidence="1">Amino-acid biosynthesis; L-lysine biosynthesis via DAP pathway; LL-2,6-diaminopimelate from (S)-tetrahydrodipicolinate (succinylase route): step 3/3.</text>
</comment>
<comment type="subunit">
    <text evidence="1">Homodimer.</text>
</comment>
<comment type="similarity">
    <text evidence="1">Belongs to the peptidase M20A family. DapE subfamily.</text>
</comment>
<gene>
    <name evidence="1" type="primary">dapE</name>
    <name type="ordered locus">YPO3053</name>
    <name type="ordered locus">y1427</name>
    <name type="ordered locus">YP_2675</name>
</gene>
<evidence type="ECO:0000255" key="1">
    <source>
        <dbReference type="HAMAP-Rule" id="MF_01690"/>
    </source>
</evidence>
<protein>
    <recommendedName>
        <fullName evidence="1">Succinyl-diaminopimelate desuccinylase</fullName>
        <shortName evidence="1">SDAP desuccinylase</shortName>
        <ecNumber evidence="1">3.5.1.18</ecNumber>
    </recommendedName>
    <alternativeName>
        <fullName evidence="1">N-succinyl-LL-2,6-diaminoheptanedioate amidohydrolase</fullName>
    </alternativeName>
</protein>